<dbReference type="EC" id="4.2.1.11" evidence="1"/>
<dbReference type="EMBL" id="AF020677">
    <property type="protein sequence ID" value="AAB86924.1"/>
    <property type="molecule type" value="Genomic_DNA"/>
</dbReference>
<dbReference type="SMR" id="O30885"/>
<dbReference type="UniPathway" id="UPA00109">
    <property type="reaction ID" value="UER00187"/>
</dbReference>
<dbReference type="GO" id="GO:0009986">
    <property type="term" value="C:cell surface"/>
    <property type="evidence" value="ECO:0007669"/>
    <property type="project" value="UniProtKB-SubCell"/>
</dbReference>
<dbReference type="GO" id="GO:0005576">
    <property type="term" value="C:extracellular region"/>
    <property type="evidence" value="ECO:0007669"/>
    <property type="project" value="UniProtKB-SubCell"/>
</dbReference>
<dbReference type="GO" id="GO:0000015">
    <property type="term" value="C:phosphopyruvate hydratase complex"/>
    <property type="evidence" value="ECO:0007669"/>
    <property type="project" value="InterPro"/>
</dbReference>
<dbReference type="GO" id="GO:0000287">
    <property type="term" value="F:magnesium ion binding"/>
    <property type="evidence" value="ECO:0007669"/>
    <property type="project" value="InterPro"/>
</dbReference>
<dbReference type="GO" id="GO:0004634">
    <property type="term" value="F:phosphopyruvate hydratase activity"/>
    <property type="evidence" value="ECO:0007669"/>
    <property type="project" value="UniProtKB-EC"/>
</dbReference>
<dbReference type="GO" id="GO:0006096">
    <property type="term" value="P:glycolytic process"/>
    <property type="evidence" value="ECO:0007669"/>
    <property type="project" value="UniProtKB-UniPathway"/>
</dbReference>
<dbReference type="Gene3D" id="3.20.20.120">
    <property type="entry name" value="Enolase-like C-terminal domain"/>
    <property type="match status" value="1"/>
</dbReference>
<dbReference type="Gene3D" id="3.30.390.10">
    <property type="entry name" value="Enolase-like, N-terminal domain"/>
    <property type="match status" value="1"/>
</dbReference>
<dbReference type="InterPro" id="IPR000941">
    <property type="entry name" value="Enolase"/>
</dbReference>
<dbReference type="InterPro" id="IPR036849">
    <property type="entry name" value="Enolase-like_C_sf"/>
</dbReference>
<dbReference type="InterPro" id="IPR029017">
    <property type="entry name" value="Enolase-like_N"/>
</dbReference>
<dbReference type="InterPro" id="IPR020810">
    <property type="entry name" value="Enolase_C"/>
</dbReference>
<dbReference type="InterPro" id="IPR020811">
    <property type="entry name" value="Enolase_N"/>
</dbReference>
<dbReference type="PANTHER" id="PTHR11902">
    <property type="entry name" value="ENOLASE"/>
    <property type="match status" value="1"/>
</dbReference>
<dbReference type="PANTHER" id="PTHR11902:SF1">
    <property type="entry name" value="ENOLASE"/>
    <property type="match status" value="1"/>
</dbReference>
<dbReference type="Pfam" id="PF00113">
    <property type="entry name" value="Enolase_C"/>
    <property type="match status" value="1"/>
</dbReference>
<dbReference type="Pfam" id="PF03952">
    <property type="entry name" value="Enolase_N"/>
    <property type="match status" value="1"/>
</dbReference>
<dbReference type="PRINTS" id="PR00148">
    <property type="entry name" value="ENOLASE"/>
</dbReference>
<dbReference type="SMART" id="SM01192">
    <property type="entry name" value="Enolase_C"/>
    <property type="match status" value="1"/>
</dbReference>
<dbReference type="SMART" id="SM01193">
    <property type="entry name" value="Enolase_N"/>
    <property type="match status" value="1"/>
</dbReference>
<dbReference type="SUPFAM" id="SSF51604">
    <property type="entry name" value="Enolase C-terminal domain-like"/>
    <property type="match status" value="1"/>
</dbReference>
<dbReference type="SUPFAM" id="SSF54826">
    <property type="entry name" value="Enolase N-terminal domain-like"/>
    <property type="match status" value="1"/>
</dbReference>
<evidence type="ECO:0000250" key="1">
    <source>
        <dbReference type="UniProtKB" id="P0A6P9"/>
    </source>
</evidence>
<evidence type="ECO:0000305" key="2"/>
<accession>O30885</accession>
<comment type="function">
    <text evidence="1">Catalyzes the reversible conversion of 2-phosphoglycerate (2-PG) into phosphoenolpyruvate (PEP). It is essential for the degradation of carbohydrates via glycolysis.</text>
</comment>
<comment type="catalytic activity">
    <reaction evidence="1">
        <text>(2R)-2-phosphoglycerate = phosphoenolpyruvate + H2O</text>
        <dbReference type="Rhea" id="RHEA:10164"/>
        <dbReference type="ChEBI" id="CHEBI:15377"/>
        <dbReference type="ChEBI" id="CHEBI:58289"/>
        <dbReference type="ChEBI" id="CHEBI:58702"/>
        <dbReference type="EC" id="4.2.1.11"/>
    </reaction>
</comment>
<comment type="pathway">
    <text evidence="1">Carbohydrate degradation; glycolysis; pyruvate from D-glyceraldehyde 3-phosphate: step 4/5.</text>
</comment>
<comment type="subcellular location">
    <subcellularLocation>
        <location evidence="1">Cytoplasm</location>
    </subcellularLocation>
    <subcellularLocation>
        <location evidence="1">Secreted</location>
    </subcellularLocation>
    <subcellularLocation>
        <location evidence="1">Cell surface</location>
    </subcellularLocation>
    <text evidence="1">Fractions of enolase are present in both the cytoplasm and on the cell surface.</text>
</comment>
<comment type="similarity">
    <text evidence="2">Belongs to the enolase family.</text>
</comment>
<protein>
    <recommendedName>
        <fullName evidence="1">Enolase</fullName>
        <ecNumber evidence="1">4.2.1.11</ecNumber>
    </recommendedName>
    <alternativeName>
        <fullName evidence="1">2-phospho-D-glycerate hydro-lyase</fullName>
    </alternativeName>
    <alternativeName>
        <fullName evidence="1">2-phosphoglycerate dehydratase</fullName>
    </alternativeName>
</protein>
<organism>
    <name type="scientific">Campylobacter fetus</name>
    <dbReference type="NCBI Taxonomy" id="196"/>
    <lineage>
        <taxon>Bacteria</taxon>
        <taxon>Pseudomonadati</taxon>
        <taxon>Campylobacterota</taxon>
        <taxon>Epsilonproteobacteria</taxon>
        <taxon>Campylobacterales</taxon>
        <taxon>Campylobacteraceae</taxon>
        <taxon>Campylobacter</taxon>
    </lineage>
</organism>
<reference key="1">
    <citation type="journal article" date="1997" name="J. Bacteriol.">
        <title>Nested DNA inversion of Campylobacter fetus S-layer genes is recA dependent.</title>
        <authorList>
            <person name="Dworkin J."/>
            <person name="Shedd O.L."/>
            <person name="Blaser M.J."/>
        </authorList>
    </citation>
    <scope>NUCLEOTIDE SEQUENCE [GENOMIC DNA]</scope>
    <source>
        <strain>84-32 / 23D</strain>
    </source>
</reference>
<name>ENO_CAMFE</name>
<feature type="chain" id="PRO_0000133860" description="Enolase">
    <location>
        <begin position="1"/>
        <end position="207" status="greater than"/>
    </location>
</feature>
<feature type="active site" description="Proton donor" evidence="1">
    <location>
        <position position="204"/>
    </location>
</feature>
<feature type="binding site" evidence="1">
    <location>
        <position position="162"/>
    </location>
    <ligand>
        <name>(2R)-2-phosphoglycerate</name>
        <dbReference type="ChEBI" id="CHEBI:58289"/>
    </ligand>
</feature>
<feature type="non-terminal residue">
    <location>
        <position position="207"/>
    </location>
</feature>
<proteinExistence type="inferred from homology"/>
<keyword id="KW-0963">Cytoplasm</keyword>
<keyword id="KW-0324">Glycolysis</keyword>
<keyword id="KW-0456">Lyase</keyword>
<keyword id="KW-0460">Magnesium</keyword>
<keyword id="KW-0479">Metal-binding</keyword>
<keyword id="KW-0964">Secreted</keyword>
<sequence length="207" mass="21833">MVIVKKISAIEVLDSRGNPTIKTKVELCDGSIGEAIVPSGASTGKRERLELRDGGEAFGGKGVLKAIKNVNSMIAEEICGKDAYNQKAIDDAMLALDGTDNYSRIGANAVLGVSMAVARAAANSLNIPLYRYLGGANACTLPVPMFNIINGGAHANNSVDFQEFMIMPFGFSKFSNALRAATEVYQTLKKILNDLGHSTAVGDEGGF</sequence>
<gene>
    <name evidence="2" type="primary">eno</name>
</gene>